<proteinExistence type="inferred from homology"/>
<keyword id="KW-0963">Cytoplasm</keyword>
<keyword id="KW-0342">GTP-binding</keyword>
<keyword id="KW-0378">Hydrolase</keyword>
<keyword id="KW-0460">Magnesium</keyword>
<keyword id="KW-0479">Metal-binding</keyword>
<keyword id="KW-0547">Nucleotide-binding</keyword>
<keyword id="KW-0630">Potassium</keyword>
<keyword id="KW-1185">Reference proteome</keyword>
<keyword id="KW-0819">tRNA processing</keyword>
<comment type="function">
    <text evidence="1">Exhibits a very high intrinsic GTPase hydrolysis rate. Involved in the addition of a carboxymethylaminomethyl (cmnm) group at the wobble position (U34) of certain tRNAs, forming tRNA-cmnm(5)s(2)U34.</text>
</comment>
<comment type="cofactor">
    <cofactor evidence="1">
        <name>K(+)</name>
        <dbReference type="ChEBI" id="CHEBI:29103"/>
    </cofactor>
    <text evidence="1">Binds 1 potassium ion per subunit.</text>
</comment>
<comment type="subunit">
    <text evidence="1">Homodimer. Heterotetramer of two MnmE and two MnmG subunits.</text>
</comment>
<comment type="subcellular location">
    <subcellularLocation>
        <location evidence="1">Cytoplasm</location>
    </subcellularLocation>
</comment>
<comment type="similarity">
    <text evidence="1">Belongs to the TRAFAC class TrmE-Era-EngA-EngB-Septin-like GTPase superfamily. TrmE GTPase family.</text>
</comment>
<organism>
    <name type="scientific">Synechococcus sp. (strain CC9311)</name>
    <dbReference type="NCBI Taxonomy" id="64471"/>
    <lineage>
        <taxon>Bacteria</taxon>
        <taxon>Bacillati</taxon>
        <taxon>Cyanobacteriota</taxon>
        <taxon>Cyanophyceae</taxon>
        <taxon>Synechococcales</taxon>
        <taxon>Synechococcaceae</taxon>
        <taxon>Synechococcus</taxon>
    </lineage>
</organism>
<protein>
    <recommendedName>
        <fullName evidence="1">tRNA modification GTPase MnmE</fullName>
        <ecNumber evidence="1">3.6.-.-</ecNumber>
    </recommendedName>
</protein>
<evidence type="ECO:0000255" key="1">
    <source>
        <dbReference type="HAMAP-Rule" id="MF_00379"/>
    </source>
</evidence>
<feature type="chain" id="PRO_0000345917" description="tRNA modification GTPase MnmE">
    <location>
        <begin position="1"/>
        <end position="463"/>
    </location>
</feature>
<feature type="domain" description="TrmE-type G">
    <location>
        <begin position="227"/>
        <end position="386"/>
    </location>
</feature>
<feature type="binding site" evidence="1">
    <location>
        <position position="30"/>
    </location>
    <ligand>
        <name>(6S)-5-formyl-5,6,7,8-tetrahydrofolate</name>
        <dbReference type="ChEBI" id="CHEBI:57457"/>
    </ligand>
</feature>
<feature type="binding site" evidence="1">
    <location>
        <position position="92"/>
    </location>
    <ligand>
        <name>(6S)-5-formyl-5,6,7,8-tetrahydrofolate</name>
        <dbReference type="ChEBI" id="CHEBI:57457"/>
    </ligand>
</feature>
<feature type="binding site" evidence="1">
    <location>
        <position position="132"/>
    </location>
    <ligand>
        <name>(6S)-5-formyl-5,6,7,8-tetrahydrofolate</name>
        <dbReference type="ChEBI" id="CHEBI:57457"/>
    </ligand>
</feature>
<feature type="binding site" evidence="1">
    <location>
        <begin position="237"/>
        <end position="242"/>
    </location>
    <ligand>
        <name>GTP</name>
        <dbReference type="ChEBI" id="CHEBI:37565"/>
    </ligand>
</feature>
<feature type="binding site" evidence="1">
    <location>
        <position position="237"/>
    </location>
    <ligand>
        <name>K(+)</name>
        <dbReference type="ChEBI" id="CHEBI:29103"/>
    </ligand>
</feature>
<feature type="binding site" evidence="1">
    <location>
        <position position="241"/>
    </location>
    <ligand>
        <name>Mg(2+)</name>
        <dbReference type="ChEBI" id="CHEBI:18420"/>
    </ligand>
</feature>
<feature type="binding site" evidence="1">
    <location>
        <begin position="256"/>
        <end position="262"/>
    </location>
    <ligand>
        <name>GTP</name>
        <dbReference type="ChEBI" id="CHEBI:37565"/>
    </ligand>
</feature>
<feature type="binding site" evidence="1">
    <location>
        <position position="256"/>
    </location>
    <ligand>
        <name>K(+)</name>
        <dbReference type="ChEBI" id="CHEBI:29103"/>
    </ligand>
</feature>
<feature type="binding site" evidence="1">
    <location>
        <position position="258"/>
    </location>
    <ligand>
        <name>K(+)</name>
        <dbReference type="ChEBI" id="CHEBI:29103"/>
    </ligand>
</feature>
<feature type="binding site" evidence="1">
    <location>
        <position position="261"/>
    </location>
    <ligand>
        <name>K(+)</name>
        <dbReference type="ChEBI" id="CHEBI:29103"/>
    </ligand>
</feature>
<feature type="binding site" evidence="1">
    <location>
        <position position="262"/>
    </location>
    <ligand>
        <name>Mg(2+)</name>
        <dbReference type="ChEBI" id="CHEBI:18420"/>
    </ligand>
</feature>
<feature type="binding site" evidence="1">
    <location>
        <begin position="281"/>
        <end position="284"/>
    </location>
    <ligand>
        <name>GTP</name>
        <dbReference type="ChEBI" id="CHEBI:37565"/>
    </ligand>
</feature>
<feature type="binding site" evidence="1">
    <location>
        <begin position="342"/>
        <end position="345"/>
    </location>
    <ligand>
        <name>GTP</name>
        <dbReference type="ChEBI" id="CHEBI:37565"/>
    </ligand>
</feature>
<feature type="binding site" evidence="1">
    <location>
        <position position="463"/>
    </location>
    <ligand>
        <name>(6S)-5-formyl-5,6,7,8-tetrahydrofolate</name>
        <dbReference type="ChEBI" id="CHEBI:57457"/>
    </ligand>
</feature>
<reference key="1">
    <citation type="journal article" date="2006" name="Proc. Natl. Acad. Sci. U.S.A.">
        <title>Genome sequence of Synechococcus CC9311: insights into adaptation to a coastal environment.</title>
        <authorList>
            <person name="Palenik B."/>
            <person name="Ren Q."/>
            <person name="Dupont C.L."/>
            <person name="Myers G.S."/>
            <person name="Heidelberg J.F."/>
            <person name="Badger J.H."/>
            <person name="Madupu R."/>
            <person name="Nelson W.C."/>
            <person name="Brinkac L.M."/>
            <person name="Dodson R.J."/>
            <person name="Durkin A.S."/>
            <person name="Daugherty S.C."/>
            <person name="Sullivan S.A."/>
            <person name="Khouri H."/>
            <person name="Mohamoud Y."/>
            <person name="Halpin R."/>
            <person name="Paulsen I.T."/>
        </authorList>
    </citation>
    <scope>NUCLEOTIDE SEQUENCE [LARGE SCALE GENOMIC DNA]</scope>
    <source>
        <strain>CC9311</strain>
    </source>
</reference>
<accession>Q0I6N5</accession>
<gene>
    <name evidence="1" type="primary">mnmE</name>
    <name evidence="1" type="synonym">trmE</name>
    <name type="ordered locus">sync_2699</name>
</gene>
<name>MNME_SYNS3</name>
<sequence>MSGIGPDQALSIAAIATAVAPGQGGIAVIRLSGPSAVRAVAAITVIPGQQVWESHRVLYGHVVAAGGVERLDEVLVLVMLAPRSFTGEDVVEIHCHGGVIAVQQVLARVLEQPGVRRALPGEFSQRAVLNGRLDLTRAEAIGDLVGARSQRAAQLAMAGLDGGIQKKMVVLRERLLDQLSELEARVDFEEDLPPLNGEALLQELQAVRLELLTLVADGERGSVVRHGLRVALVGRPNVGKSSLLNLLSRRERAIVTDLPGTTRDLLESEIVLDGVPITLLDTAGIRATSNAVEKLGIARSRDALASADLVLLLFDLAQGWSDDDQALFALIPEGVPCLRVGNKADLPLKAEPVAETVAASVADVRLSAVTGDGEQALVQAVLERCGALGEQPLLLALNQRQSDLAVTAAEALARSEQVAADGLPWDFWTIDLRQAIRSLGEITGEQLTESVLDRIFSRFCIGK</sequence>
<dbReference type="EC" id="3.6.-.-" evidence="1"/>
<dbReference type="EMBL" id="CP000435">
    <property type="protein sequence ID" value="ABI45491.1"/>
    <property type="molecule type" value="Genomic_DNA"/>
</dbReference>
<dbReference type="RefSeq" id="WP_011620591.1">
    <property type="nucleotide sequence ID" value="NC_008319.1"/>
</dbReference>
<dbReference type="SMR" id="Q0I6N5"/>
<dbReference type="STRING" id="64471.sync_2699"/>
<dbReference type="KEGG" id="syg:sync_2699"/>
<dbReference type="eggNOG" id="COG0486">
    <property type="taxonomic scope" value="Bacteria"/>
</dbReference>
<dbReference type="HOGENOM" id="CLU_019624_4_1_3"/>
<dbReference type="OrthoDB" id="9805918at2"/>
<dbReference type="Proteomes" id="UP000001961">
    <property type="component" value="Chromosome"/>
</dbReference>
<dbReference type="GO" id="GO:0005829">
    <property type="term" value="C:cytosol"/>
    <property type="evidence" value="ECO:0007669"/>
    <property type="project" value="TreeGrafter"/>
</dbReference>
<dbReference type="GO" id="GO:0005525">
    <property type="term" value="F:GTP binding"/>
    <property type="evidence" value="ECO:0007669"/>
    <property type="project" value="UniProtKB-UniRule"/>
</dbReference>
<dbReference type="GO" id="GO:0003924">
    <property type="term" value="F:GTPase activity"/>
    <property type="evidence" value="ECO:0007669"/>
    <property type="project" value="UniProtKB-UniRule"/>
</dbReference>
<dbReference type="GO" id="GO:0046872">
    <property type="term" value="F:metal ion binding"/>
    <property type="evidence" value="ECO:0007669"/>
    <property type="project" value="UniProtKB-KW"/>
</dbReference>
<dbReference type="GO" id="GO:0030488">
    <property type="term" value="P:tRNA methylation"/>
    <property type="evidence" value="ECO:0007669"/>
    <property type="project" value="TreeGrafter"/>
</dbReference>
<dbReference type="GO" id="GO:0002098">
    <property type="term" value="P:tRNA wobble uridine modification"/>
    <property type="evidence" value="ECO:0007669"/>
    <property type="project" value="TreeGrafter"/>
</dbReference>
<dbReference type="CDD" id="cd04164">
    <property type="entry name" value="trmE"/>
    <property type="match status" value="1"/>
</dbReference>
<dbReference type="CDD" id="cd14858">
    <property type="entry name" value="TrmE_N"/>
    <property type="match status" value="1"/>
</dbReference>
<dbReference type="Gene3D" id="3.40.50.300">
    <property type="entry name" value="P-loop containing nucleotide triphosphate hydrolases"/>
    <property type="match status" value="1"/>
</dbReference>
<dbReference type="Gene3D" id="3.30.1360.120">
    <property type="entry name" value="Probable tRNA modification gtpase trme, domain 1"/>
    <property type="match status" value="1"/>
</dbReference>
<dbReference type="Gene3D" id="1.20.120.430">
    <property type="entry name" value="tRNA modification GTPase MnmE domain 2"/>
    <property type="match status" value="1"/>
</dbReference>
<dbReference type="HAMAP" id="MF_00379">
    <property type="entry name" value="GTPase_MnmE"/>
    <property type="match status" value="1"/>
</dbReference>
<dbReference type="InterPro" id="IPR031168">
    <property type="entry name" value="G_TrmE"/>
</dbReference>
<dbReference type="InterPro" id="IPR006073">
    <property type="entry name" value="GTP-bd"/>
</dbReference>
<dbReference type="InterPro" id="IPR018948">
    <property type="entry name" value="GTP-bd_TrmE_N"/>
</dbReference>
<dbReference type="InterPro" id="IPR004520">
    <property type="entry name" value="GTPase_MnmE"/>
</dbReference>
<dbReference type="InterPro" id="IPR027368">
    <property type="entry name" value="MnmE_dom2"/>
</dbReference>
<dbReference type="InterPro" id="IPR025867">
    <property type="entry name" value="MnmE_helical"/>
</dbReference>
<dbReference type="InterPro" id="IPR027417">
    <property type="entry name" value="P-loop_NTPase"/>
</dbReference>
<dbReference type="InterPro" id="IPR005225">
    <property type="entry name" value="Small_GTP-bd"/>
</dbReference>
<dbReference type="InterPro" id="IPR027266">
    <property type="entry name" value="TrmE/GcvT_dom1"/>
</dbReference>
<dbReference type="NCBIfam" id="TIGR00450">
    <property type="entry name" value="mnmE_trmE_thdF"/>
    <property type="match status" value="1"/>
</dbReference>
<dbReference type="NCBIfam" id="NF003661">
    <property type="entry name" value="PRK05291.1-3"/>
    <property type="match status" value="1"/>
</dbReference>
<dbReference type="NCBIfam" id="TIGR00231">
    <property type="entry name" value="small_GTP"/>
    <property type="match status" value="1"/>
</dbReference>
<dbReference type="PANTHER" id="PTHR42714">
    <property type="entry name" value="TRNA MODIFICATION GTPASE GTPBP3"/>
    <property type="match status" value="1"/>
</dbReference>
<dbReference type="PANTHER" id="PTHR42714:SF2">
    <property type="entry name" value="TRNA MODIFICATION GTPASE GTPBP3, MITOCHONDRIAL"/>
    <property type="match status" value="1"/>
</dbReference>
<dbReference type="Pfam" id="PF01926">
    <property type="entry name" value="MMR_HSR1"/>
    <property type="match status" value="1"/>
</dbReference>
<dbReference type="Pfam" id="PF12631">
    <property type="entry name" value="MnmE_helical"/>
    <property type="match status" value="1"/>
</dbReference>
<dbReference type="Pfam" id="PF10396">
    <property type="entry name" value="TrmE_N"/>
    <property type="match status" value="1"/>
</dbReference>
<dbReference type="PRINTS" id="PR00449">
    <property type="entry name" value="RASTRNSFRMNG"/>
</dbReference>
<dbReference type="SUPFAM" id="SSF52540">
    <property type="entry name" value="P-loop containing nucleoside triphosphate hydrolases"/>
    <property type="match status" value="1"/>
</dbReference>
<dbReference type="SUPFAM" id="SSF116878">
    <property type="entry name" value="TrmE connector domain"/>
    <property type="match status" value="1"/>
</dbReference>
<dbReference type="PROSITE" id="PS51709">
    <property type="entry name" value="G_TRME"/>
    <property type="match status" value="1"/>
</dbReference>